<reference key="1">
    <citation type="submission" date="2007-11" db="EMBL/GenBank/DDBJ databases">
        <authorList>
            <consortium name="The Salmonella enterica serovar Paratyphi B Genome Sequencing Project"/>
            <person name="McClelland M."/>
            <person name="Sanderson E.K."/>
            <person name="Porwollik S."/>
            <person name="Spieth J."/>
            <person name="Clifton W.S."/>
            <person name="Fulton R."/>
            <person name="Cordes M."/>
            <person name="Wollam A."/>
            <person name="Shah N."/>
            <person name="Pepin K."/>
            <person name="Bhonagiri V."/>
            <person name="Nash W."/>
            <person name="Johnson M."/>
            <person name="Thiruvilangam P."/>
            <person name="Wilson R."/>
        </authorList>
    </citation>
    <scope>NUCLEOTIDE SEQUENCE [LARGE SCALE GENOMIC DNA]</scope>
    <source>
        <strain>ATCC BAA-1250 / SPB7</strain>
    </source>
</reference>
<proteinExistence type="inferred from homology"/>
<evidence type="ECO:0000255" key="1">
    <source>
        <dbReference type="HAMAP-Rule" id="MF_00041"/>
    </source>
</evidence>
<comment type="catalytic activity">
    <reaction evidence="1">
        <text>tRNA(Cys) + L-cysteine + ATP = L-cysteinyl-tRNA(Cys) + AMP + diphosphate</text>
        <dbReference type="Rhea" id="RHEA:17773"/>
        <dbReference type="Rhea" id="RHEA-COMP:9661"/>
        <dbReference type="Rhea" id="RHEA-COMP:9679"/>
        <dbReference type="ChEBI" id="CHEBI:30616"/>
        <dbReference type="ChEBI" id="CHEBI:33019"/>
        <dbReference type="ChEBI" id="CHEBI:35235"/>
        <dbReference type="ChEBI" id="CHEBI:78442"/>
        <dbReference type="ChEBI" id="CHEBI:78517"/>
        <dbReference type="ChEBI" id="CHEBI:456215"/>
        <dbReference type="EC" id="6.1.1.16"/>
    </reaction>
</comment>
<comment type="cofactor">
    <cofactor evidence="1">
        <name>Zn(2+)</name>
        <dbReference type="ChEBI" id="CHEBI:29105"/>
    </cofactor>
    <text evidence="1">Binds 1 zinc ion per subunit.</text>
</comment>
<comment type="subunit">
    <text evidence="1">Monomer.</text>
</comment>
<comment type="subcellular location">
    <subcellularLocation>
        <location evidence="1">Cytoplasm</location>
    </subcellularLocation>
</comment>
<comment type="similarity">
    <text evidence="1">Belongs to the class-I aminoacyl-tRNA synthetase family.</text>
</comment>
<sequence length="461" mass="52287">MLKIFNTLTRQKEEFKPIHAGEVGMYVCGITVYDLCHIGHGRTFVAFDVVARYLRFLGYKLKYVRNITDIDDKIIKRANENGESFVALVDRMIAEMHQDFDALNILRPDSEPRATHHIQEIIELTRTLIEKGHAYVADNGDVMFDVPTDPTYGQLSRQDLEQLQAGARVDVVDVKRNPMDFVLWKMSKEGEPSWPSPWGEGRPGWHIECSAMNCKQLGNHFDIHGGGSDLMFPHHENEIAQSTCAHDGEYVNYWMHSGMVMVDREKMSKSLGNFFTVRDVLKYYDAETVRYFLMSGHYRSQLNYSEENLKQARASLERLYTALRGTDKSAAPAGGEAFEARFVEAMNDDFNTPEAYSVLFDMAREVNRLKGEDMTAANAMASHLRKISGVLGLLEQEPDVFLQSGAQADDGEVAEIEALIQQRLDARKAKDWAAADAARDRLTEMGIILEDGPQGTTWRRK</sequence>
<keyword id="KW-0030">Aminoacyl-tRNA synthetase</keyword>
<keyword id="KW-0067">ATP-binding</keyword>
<keyword id="KW-0963">Cytoplasm</keyword>
<keyword id="KW-0436">Ligase</keyword>
<keyword id="KW-0479">Metal-binding</keyword>
<keyword id="KW-0547">Nucleotide-binding</keyword>
<keyword id="KW-0648">Protein biosynthesis</keyword>
<keyword id="KW-0862">Zinc</keyword>
<gene>
    <name evidence="1" type="primary">cysS</name>
    <name type="ordered locus">SPAB_03027</name>
</gene>
<protein>
    <recommendedName>
        <fullName evidence="1">Cysteine--tRNA ligase</fullName>
        <ecNumber evidence="1">6.1.1.16</ecNumber>
    </recommendedName>
    <alternativeName>
        <fullName evidence="1">Cysteinyl-tRNA synthetase</fullName>
        <shortName evidence="1">CysRS</shortName>
    </alternativeName>
</protein>
<organism>
    <name type="scientific">Salmonella paratyphi B (strain ATCC BAA-1250 / SPB7)</name>
    <dbReference type="NCBI Taxonomy" id="1016998"/>
    <lineage>
        <taxon>Bacteria</taxon>
        <taxon>Pseudomonadati</taxon>
        <taxon>Pseudomonadota</taxon>
        <taxon>Gammaproteobacteria</taxon>
        <taxon>Enterobacterales</taxon>
        <taxon>Enterobacteriaceae</taxon>
        <taxon>Salmonella</taxon>
    </lineage>
</organism>
<dbReference type="EC" id="6.1.1.16" evidence="1"/>
<dbReference type="EMBL" id="CP000886">
    <property type="protein sequence ID" value="ABX68390.1"/>
    <property type="molecule type" value="Genomic_DNA"/>
</dbReference>
<dbReference type="RefSeq" id="WP_000912377.1">
    <property type="nucleotide sequence ID" value="NC_010102.1"/>
</dbReference>
<dbReference type="SMR" id="A9MW31"/>
<dbReference type="KEGG" id="spq:SPAB_03027"/>
<dbReference type="PATRIC" id="fig|1016998.12.peg.2855"/>
<dbReference type="HOGENOM" id="CLU_013528_0_1_6"/>
<dbReference type="BioCyc" id="SENT1016998:SPAB_RS12340-MONOMER"/>
<dbReference type="Proteomes" id="UP000008556">
    <property type="component" value="Chromosome"/>
</dbReference>
<dbReference type="GO" id="GO:0005829">
    <property type="term" value="C:cytosol"/>
    <property type="evidence" value="ECO:0007669"/>
    <property type="project" value="TreeGrafter"/>
</dbReference>
<dbReference type="GO" id="GO:0005524">
    <property type="term" value="F:ATP binding"/>
    <property type="evidence" value="ECO:0007669"/>
    <property type="project" value="UniProtKB-UniRule"/>
</dbReference>
<dbReference type="GO" id="GO:0004817">
    <property type="term" value="F:cysteine-tRNA ligase activity"/>
    <property type="evidence" value="ECO:0007669"/>
    <property type="project" value="UniProtKB-UniRule"/>
</dbReference>
<dbReference type="GO" id="GO:0008270">
    <property type="term" value="F:zinc ion binding"/>
    <property type="evidence" value="ECO:0007669"/>
    <property type="project" value="UniProtKB-UniRule"/>
</dbReference>
<dbReference type="GO" id="GO:0006423">
    <property type="term" value="P:cysteinyl-tRNA aminoacylation"/>
    <property type="evidence" value="ECO:0007669"/>
    <property type="project" value="UniProtKB-UniRule"/>
</dbReference>
<dbReference type="CDD" id="cd07963">
    <property type="entry name" value="Anticodon_Ia_Cys"/>
    <property type="match status" value="1"/>
</dbReference>
<dbReference type="CDD" id="cd00672">
    <property type="entry name" value="CysRS_core"/>
    <property type="match status" value="1"/>
</dbReference>
<dbReference type="FunFam" id="1.20.120.1910:FF:000001">
    <property type="entry name" value="Cysteine--tRNA ligase"/>
    <property type="match status" value="1"/>
</dbReference>
<dbReference type="FunFam" id="3.40.50.620:FF:000009">
    <property type="entry name" value="Cysteine--tRNA ligase"/>
    <property type="match status" value="1"/>
</dbReference>
<dbReference type="Gene3D" id="1.20.120.1910">
    <property type="entry name" value="Cysteine-tRNA ligase, C-terminal anti-codon recognition domain"/>
    <property type="match status" value="1"/>
</dbReference>
<dbReference type="Gene3D" id="3.40.50.620">
    <property type="entry name" value="HUPs"/>
    <property type="match status" value="1"/>
</dbReference>
<dbReference type="HAMAP" id="MF_00041">
    <property type="entry name" value="Cys_tRNA_synth"/>
    <property type="match status" value="1"/>
</dbReference>
<dbReference type="InterPro" id="IPR015803">
    <property type="entry name" value="Cys-tRNA-ligase"/>
</dbReference>
<dbReference type="InterPro" id="IPR015273">
    <property type="entry name" value="Cys-tRNA-synt_Ia_DALR"/>
</dbReference>
<dbReference type="InterPro" id="IPR024909">
    <property type="entry name" value="Cys-tRNA/MSH_ligase"/>
</dbReference>
<dbReference type="InterPro" id="IPR056411">
    <property type="entry name" value="CysS_C"/>
</dbReference>
<dbReference type="InterPro" id="IPR014729">
    <property type="entry name" value="Rossmann-like_a/b/a_fold"/>
</dbReference>
<dbReference type="InterPro" id="IPR032678">
    <property type="entry name" value="tRNA-synt_1_cat_dom"/>
</dbReference>
<dbReference type="InterPro" id="IPR009080">
    <property type="entry name" value="tRNAsynth_Ia_anticodon-bd"/>
</dbReference>
<dbReference type="NCBIfam" id="TIGR00435">
    <property type="entry name" value="cysS"/>
    <property type="match status" value="1"/>
</dbReference>
<dbReference type="PANTHER" id="PTHR10890:SF3">
    <property type="entry name" value="CYSTEINE--TRNA LIGASE, CYTOPLASMIC"/>
    <property type="match status" value="1"/>
</dbReference>
<dbReference type="PANTHER" id="PTHR10890">
    <property type="entry name" value="CYSTEINYL-TRNA SYNTHETASE"/>
    <property type="match status" value="1"/>
</dbReference>
<dbReference type="Pfam" id="PF23493">
    <property type="entry name" value="CysS_C"/>
    <property type="match status" value="1"/>
</dbReference>
<dbReference type="Pfam" id="PF09190">
    <property type="entry name" value="DALR_2"/>
    <property type="match status" value="1"/>
</dbReference>
<dbReference type="Pfam" id="PF01406">
    <property type="entry name" value="tRNA-synt_1e"/>
    <property type="match status" value="1"/>
</dbReference>
<dbReference type="PRINTS" id="PR00983">
    <property type="entry name" value="TRNASYNTHCYS"/>
</dbReference>
<dbReference type="SMART" id="SM00840">
    <property type="entry name" value="DALR_2"/>
    <property type="match status" value="1"/>
</dbReference>
<dbReference type="SUPFAM" id="SSF47323">
    <property type="entry name" value="Anticodon-binding domain of a subclass of class I aminoacyl-tRNA synthetases"/>
    <property type="match status" value="1"/>
</dbReference>
<dbReference type="SUPFAM" id="SSF52374">
    <property type="entry name" value="Nucleotidylyl transferase"/>
    <property type="match status" value="1"/>
</dbReference>
<accession>A9MW31</accession>
<feature type="chain" id="PRO_0000332895" description="Cysteine--tRNA ligase">
    <location>
        <begin position="1"/>
        <end position="461"/>
    </location>
</feature>
<feature type="short sequence motif" description="'HIGH' region">
    <location>
        <begin position="30"/>
        <end position="40"/>
    </location>
</feature>
<feature type="short sequence motif" description="'KMSKS' region">
    <location>
        <begin position="266"/>
        <end position="270"/>
    </location>
</feature>
<feature type="binding site" evidence="1">
    <location>
        <position position="28"/>
    </location>
    <ligand>
        <name>Zn(2+)</name>
        <dbReference type="ChEBI" id="CHEBI:29105"/>
    </ligand>
</feature>
<feature type="binding site" evidence="1">
    <location>
        <position position="209"/>
    </location>
    <ligand>
        <name>Zn(2+)</name>
        <dbReference type="ChEBI" id="CHEBI:29105"/>
    </ligand>
</feature>
<feature type="binding site" evidence="1">
    <location>
        <position position="234"/>
    </location>
    <ligand>
        <name>Zn(2+)</name>
        <dbReference type="ChEBI" id="CHEBI:29105"/>
    </ligand>
</feature>
<feature type="binding site" evidence="1">
    <location>
        <position position="238"/>
    </location>
    <ligand>
        <name>Zn(2+)</name>
        <dbReference type="ChEBI" id="CHEBI:29105"/>
    </ligand>
</feature>
<feature type="binding site" evidence="1">
    <location>
        <position position="269"/>
    </location>
    <ligand>
        <name>ATP</name>
        <dbReference type="ChEBI" id="CHEBI:30616"/>
    </ligand>
</feature>
<name>SYC_SALPB</name>